<name>NIKR_HALSA</name>
<reference key="1">
    <citation type="journal article" date="2000" name="Proc. Natl. Acad. Sci. U.S.A.">
        <title>Genome sequence of Halobacterium species NRC-1.</title>
        <authorList>
            <person name="Ng W.V."/>
            <person name="Kennedy S.P."/>
            <person name="Mahairas G.G."/>
            <person name="Berquist B."/>
            <person name="Pan M."/>
            <person name="Shukla H.D."/>
            <person name="Lasky S.R."/>
            <person name="Baliga N.S."/>
            <person name="Thorsson V."/>
            <person name="Sbrogna J."/>
            <person name="Swartzell S."/>
            <person name="Weir D."/>
            <person name="Hall J."/>
            <person name="Dahl T.A."/>
            <person name="Welti R."/>
            <person name="Goo Y.A."/>
            <person name="Leithauser B."/>
            <person name="Keller K."/>
            <person name="Cruz R."/>
            <person name="Danson M.J."/>
            <person name="Hough D.W."/>
            <person name="Maddocks D.G."/>
            <person name="Jablonski P.E."/>
            <person name="Krebs M.P."/>
            <person name="Angevine C.M."/>
            <person name="Dale H."/>
            <person name="Isenbarger T.A."/>
            <person name="Peck R.F."/>
            <person name="Pohlschroder M."/>
            <person name="Spudich J.L."/>
            <person name="Jung K.-H."/>
            <person name="Alam M."/>
            <person name="Freitas T."/>
            <person name="Hou S."/>
            <person name="Daniels C.J."/>
            <person name="Dennis P.P."/>
            <person name="Omer A.D."/>
            <person name="Ebhardt H."/>
            <person name="Lowe T.M."/>
            <person name="Liang P."/>
            <person name="Riley M."/>
            <person name="Hood L."/>
            <person name="DasSarma S."/>
        </authorList>
    </citation>
    <scope>NUCLEOTIDE SEQUENCE [LARGE SCALE GENOMIC DNA]</scope>
    <source>
        <strain>ATCC 700922 / JCM 11081 / NRC-1</strain>
    </source>
</reference>
<proteinExistence type="inferred from homology"/>
<comment type="function">
    <text evidence="1">Transcriptional regulator.</text>
</comment>
<comment type="cofactor">
    <cofactor evidence="1">
        <name>Ni(2+)</name>
        <dbReference type="ChEBI" id="CHEBI:49786"/>
    </cofactor>
    <text evidence="1">Binds 1 nickel ion per subunit.</text>
</comment>
<comment type="subunit">
    <text evidence="1">Homotetramer.</text>
</comment>
<comment type="similarity">
    <text evidence="1">Belongs to the transcriptional regulatory CopG/NikR family.</text>
</comment>
<comment type="sequence caution" evidence="2">
    <conflict type="erroneous initiation">
        <sequence resource="EMBL-CDS" id="AAG18766"/>
    </conflict>
</comment>
<sequence length="142" mass="15874">MSVVSVSMPEELLERLDDFADDHGYTGRSEVVREASRNLLGEFEDKKLEGRELMGVVTVVFDYETTTVEEKMMHLRHEHEGLVASNFHSHVGGHHCMELFVLEGSLESISTFVGKIRATKDTLTIDYSVLPVDEFGGLADVS</sequence>
<keyword id="KW-0238">DNA-binding</keyword>
<keyword id="KW-0479">Metal-binding</keyword>
<keyword id="KW-0533">Nickel</keyword>
<keyword id="KW-1185">Reference proteome</keyword>
<keyword id="KW-0804">Transcription</keyword>
<keyword id="KW-0805">Transcription regulation</keyword>
<protein>
    <recommendedName>
        <fullName evidence="1">Putative nickel-responsive regulator</fullName>
    </recommendedName>
</protein>
<dbReference type="EMBL" id="AE004437">
    <property type="protein sequence ID" value="AAG18766.1"/>
    <property type="status" value="ALT_INIT"/>
    <property type="molecule type" value="Genomic_DNA"/>
</dbReference>
<dbReference type="PIR" id="B84175">
    <property type="entry name" value="B84175"/>
</dbReference>
<dbReference type="RefSeq" id="WP_012289104.1">
    <property type="nucleotide sequence ID" value="NC_002607.1"/>
</dbReference>
<dbReference type="SMR" id="Q9HSN7"/>
<dbReference type="FunCoup" id="Q9HSN7">
    <property type="interactions" value="1"/>
</dbReference>
<dbReference type="STRING" id="64091.VNG_0147C"/>
<dbReference type="PaxDb" id="64091-VNG_0147C"/>
<dbReference type="KEGG" id="hal:VNG_0147C"/>
<dbReference type="PATRIC" id="fig|64091.14.peg.102"/>
<dbReference type="HOGENOM" id="CLU_113319_0_0_2"/>
<dbReference type="InParanoid" id="Q9HSN7"/>
<dbReference type="OrthoDB" id="9459at2157"/>
<dbReference type="PhylomeDB" id="Q9HSN7"/>
<dbReference type="Proteomes" id="UP000000554">
    <property type="component" value="Chromosome"/>
</dbReference>
<dbReference type="GO" id="GO:0003677">
    <property type="term" value="F:DNA binding"/>
    <property type="evidence" value="ECO:0000318"/>
    <property type="project" value="GO_Central"/>
</dbReference>
<dbReference type="GO" id="GO:0003700">
    <property type="term" value="F:DNA-binding transcription factor activity"/>
    <property type="evidence" value="ECO:0007669"/>
    <property type="project" value="UniProtKB-UniRule"/>
</dbReference>
<dbReference type="GO" id="GO:0016151">
    <property type="term" value="F:nickel cation binding"/>
    <property type="evidence" value="ECO:0007669"/>
    <property type="project" value="UniProtKB-UniRule"/>
</dbReference>
<dbReference type="GO" id="GO:0006355">
    <property type="term" value="P:regulation of DNA-templated transcription"/>
    <property type="evidence" value="ECO:0000318"/>
    <property type="project" value="GO_Central"/>
</dbReference>
<dbReference type="GO" id="GO:0010045">
    <property type="term" value="P:response to nickel cation"/>
    <property type="evidence" value="ECO:0007669"/>
    <property type="project" value="InterPro"/>
</dbReference>
<dbReference type="CDD" id="cd22231">
    <property type="entry name" value="RHH_NikR_HicB-like"/>
    <property type="match status" value="1"/>
</dbReference>
<dbReference type="Gene3D" id="3.30.70.1150">
    <property type="entry name" value="ACT-like. Chain A, domain 2"/>
    <property type="match status" value="1"/>
</dbReference>
<dbReference type="Gene3D" id="1.10.1220.10">
    <property type="entry name" value="Met repressor-like"/>
    <property type="match status" value="1"/>
</dbReference>
<dbReference type="HAMAP" id="MF_00476">
    <property type="entry name" value="NikR"/>
    <property type="match status" value="1"/>
</dbReference>
<dbReference type="InterPro" id="IPR027271">
    <property type="entry name" value="Acetolactate_synth/TF_NikR_C"/>
</dbReference>
<dbReference type="InterPro" id="IPR045865">
    <property type="entry name" value="ACT-like_dom_sf"/>
</dbReference>
<dbReference type="InterPro" id="IPR013321">
    <property type="entry name" value="Arc_rbn_hlx_hlx"/>
</dbReference>
<dbReference type="InterPro" id="IPR002145">
    <property type="entry name" value="CopG"/>
</dbReference>
<dbReference type="InterPro" id="IPR050192">
    <property type="entry name" value="CopG/NikR_regulator"/>
</dbReference>
<dbReference type="InterPro" id="IPR022988">
    <property type="entry name" value="Ni_resp_reg_NikR"/>
</dbReference>
<dbReference type="InterPro" id="IPR010985">
    <property type="entry name" value="Ribbon_hlx_hlx"/>
</dbReference>
<dbReference type="InterPro" id="IPR014864">
    <property type="entry name" value="TF_NikR_Ni-bd_C"/>
</dbReference>
<dbReference type="PANTHER" id="PTHR34719">
    <property type="entry name" value="NICKEL-RESPONSIVE REGULATOR"/>
    <property type="match status" value="1"/>
</dbReference>
<dbReference type="PANTHER" id="PTHR34719:SF3">
    <property type="entry name" value="NICKEL-RESPONSIVE REGULATOR-RELATED"/>
    <property type="match status" value="1"/>
</dbReference>
<dbReference type="Pfam" id="PF08753">
    <property type="entry name" value="NikR_C"/>
    <property type="match status" value="1"/>
</dbReference>
<dbReference type="Pfam" id="PF01402">
    <property type="entry name" value="RHH_1"/>
    <property type="match status" value="1"/>
</dbReference>
<dbReference type="SUPFAM" id="SSF55021">
    <property type="entry name" value="ACT-like"/>
    <property type="match status" value="1"/>
</dbReference>
<dbReference type="SUPFAM" id="SSF47598">
    <property type="entry name" value="Ribbon-helix-helix"/>
    <property type="match status" value="1"/>
</dbReference>
<organism>
    <name type="scientific">Halobacterium salinarum (strain ATCC 700922 / JCM 11081 / NRC-1)</name>
    <name type="common">Halobacterium halobium</name>
    <dbReference type="NCBI Taxonomy" id="64091"/>
    <lineage>
        <taxon>Archaea</taxon>
        <taxon>Methanobacteriati</taxon>
        <taxon>Methanobacteriota</taxon>
        <taxon>Stenosarchaea group</taxon>
        <taxon>Halobacteria</taxon>
        <taxon>Halobacteriales</taxon>
        <taxon>Halobacteriaceae</taxon>
        <taxon>Halobacterium</taxon>
        <taxon>Halobacterium salinarum NRC-34001</taxon>
    </lineage>
</organism>
<evidence type="ECO:0000255" key="1">
    <source>
        <dbReference type="HAMAP-Rule" id="MF_00476"/>
    </source>
</evidence>
<evidence type="ECO:0000305" key="2"/>
<feature type="chain" id="PRO_0000139298" description="Putative nickel-responsive regulator">
    <location>
        <begin position="1"/>
        <end position="142"/>
    </location>
</feature>
<feature type="binding site" evidence="1">
    <location>
        <position position="77"/>
    </location>
    <ligand>
        <name>Ni(2+)</name>
        <dbReference type="ChEBI" id="CHEBI:49786"/>
    </ligand>
</feature>
<feature type="binding site" evidence="1">
    <location>
        <position position="88"/>
    </location>
    <ligand>
        <name>Ni(2+)</name>
        <dbReference type="ChEBI" id="CHEBI:49786"/>
    </ligand>
</feature>
<feature type="binding site" evidence="1">
    <location>
        <position position="90"/>
    </location>
    <ligand>
        <name>Ni(2+)</name>
        <dbReference type="ChEBI" id="CHEBI:49786"/>
    </ligand>
</feature>
<feature type="binding site" evidence="1">
    <location>
        <position position="96"/>
    </location>
    <ligand>
        <name>Ni(2+)</name>
        <dbReference type="ChEBI" id="CHEBI:49786"/>
    </ligand>
</feature>
<gene>
    <name type="ordered locus">VNG_0147C</name>
</gene>
<accession>Q9HSN7</accession>